<protein>
    <recommendedName>
        <fullName>Cytidine monophosphate-N-acetylneuraminic acid hydroxylase</fullName>
        <shortName>CMP-N-acetylneuraminic acid hydroxylase</shortName>
        <ecNumber>1.14.18.2</ecNumber>
    </recommendedName>
    <alternativeName>
        <fullName>CMP-N-acetylneuraminate monooxygenase</fullName>
    </alternativeName>
    <alternativeName>
        <fullName>CMP-Neu5Ac hydroxylase</fullName>
    </alternativeName>
    <alternativeName>
        <fullName>CMP-NeuAc hydroxylase</fullName>
    </alternativeName>
</protein>
<keyword id="KW-0001">2Fe-2S</keyword>
<keyword id="KW-0963">Cytoplasm</keyword>
<keyword id="KW-0249">Electron transport</keyword>
<keyword id="KW-0408">Iron</keyword>
<keyword id="KW-0411">Iron-sulfur</keyword>
<keyword id="KW-0479">Metal-binding</keyword>
<keyword id="KW-0560">Oxidoreductase</keyword>
<keyword id="KW-1185">Reference proteome</keyword>
<keyword id="KW-0813">Transport</keyword>
<gene>
    <name type="primary">cmah</name>
    <name type="ORF">zgc:92407</name>
</gene>
<dbReference type="EC" id="1.14.18.2"/>
<dbReference type="EMBL" id="BC074033">
    <property type="protein sequence ID" value="AAH74033.1"/>
    <property type="molecule type" value="mRNA"/>
</dbReference>
<dbReference type="RefSeq" id="NP_001002192.1">
    <property type="nucleotide sequence ID" value="NM_001002192.1"/>
</dbReference>
<dbReference type="FunCoup" id="Q6GML1">
    <property type="interactions" value="121"/>
</dbReference>
<dbReference type="STRING" id="7955.ENSDARP00000141882"/>
<dbReference type="PaxDb" id="7955-ENSDARP00000074888"/>
<dbReference type="Ensembl" id="ENSDART00000080439">
    <property type="protein sequence ID" value="ENSDARP00000074888"/>
    <property type="gene ID" value="ENSDARG00000057714"/>
</dbReference>
<dbReference type="Ensembl" id="ENSDART00000166058">
    <property type="protein sequence ID" value="ENSDARP00000141882"/>
    <property type="gene ID" value="ENSDARG00000057714"/>
</dbReference>
<dbReference type="GeneID" id="431739"/>
<dbReference type="KEGG" id="dre:431739"/>
<dbReference type="AGR" id="ZFIN:ZDB-GENE-040704-33"/>
<dbReference type="CTD" id="12763"/>
<dbReference type="ZFIN" id="ZDB-GENE-040704-33">
    <property type="gene designation" value="cmah"/>
</dbReference>
<dbReference type="eggNOG" id="ENOG502QR0M">
    <property type="taxonomic scope" value="Eukaryota"/>
</dbReference>
<dbReference type="InParanoid" id="Q6GML1"/>
<dbReference type="OMA" id="WKSFLMC"/>
<dbReference type="OrthoDB" id="332863at2759"/>
<dbReference type="PhylomeDB" id="Q6GML1"/>
<dbReference type="TreeFam" id="TF331273"/>
<dbReference type="UniPathway" id="UPA00628"/>
<dbReference type="PRO" id="PR:Q6GML1"/>
<dbReference type="Proteomes" id="UP000000437">
    <property type="component" value="Chromosome 4"/>
</dbReference>
<dbReference type="Bgee" id="ENSDARG00000057714">
    <property type="expression patterns" value="Expressed in intestine and 18 other cell types or tissues"/>
</dbReference>
<dbReference type="GO" id="GO:0005737">
    <property type="term" value="C:cytoplasm"/>
    <property type="evidence" value="ECO:0000318"/>
    <property type="project" value="GO_Central"/>
</dbReference>
<dbReference type="GO" id="GO:0051537">
    <property type="term" value="F:2 iron, 2 sulfur cluster binding"/>
    <property type="evidence" value="ECO:0007669"/>
    <property type="project" value="UniProtKB-KW"/>
</dbReference>
<dbReference type="GO" id="GO:0030338">
    <property type="term" value="F:CMP-N-acetylneuraminate monooxygenase activity"/>
    <property type="evidence" value="ECO:0000318"/>
    <property type="project" value="GO_Central"/>
</dbReference>
<dbReference type="GO" id="GO:0046872">
    <property type="term" value="F:metal ion binding"/>
    <property type="evidence" value="ECO:0007669"/>
    <property type="project" value="UniProtKB-KW"/>
</dbReference>
<dbReference type="GO" id="GO:0046381">
    <property type="term" value="P:CMP-N-acetylneuraminate metabolic process"/>
    <property type="evidence" value="ECO:0000318"/>
    <property type="project" value="GO_Central"/>
</dbReference>
<dbReference type="GO" id="GO:0006054">
    <property type="term" value="P:N-acetylneuraminate metabolic process"/>
    <property type="evidence" value="ECO:0007669"/>
    <property type="project" value="UniProtKB-UniPathway"/>
</dbReference>
<dbReference type="CDD" id="cd03473">
    <property type="entry name" value="Rieske_CMP_Neu5Ac_hydrolase_N"/>
    <property type="match status" value="1"/>
</dbReference>
<dbReference type="Gene3D" id="3.60.15.10">
    <property type="entry name" value="Ribonuclease Z/Hydroxyacylglutathione hydrolase-like"/>
    <property type="match status" value="1"/>
</dbReference>
<dbReference type="Gene3D" id="2.102.10.10">
    <property type="entry name" value="Rieske [2Fe-2S] iron-sulphur domain"/>
    <property type="match status" value="1"/>
</dbReference>
<dbReference type="InterPro" id="IPR037339">
    <property type="entry name" value="CMP-Neu5Ac_hydroxylase_Rieske"/>
</dbReference>
<dbReference type="InterPro" id="IPR027033">
    <property type="entry name" value="Cnh"/>
</dbReference>
<dbReference type="InterPro" id="IPR036866">
    <property type="entry name" value="RibonucZ/Hydroxyglut_hydro"/>
</dbReference>
<dbReference type="InterPro" id="IPR017941">
    <property type="entry name" value="Rieske_2Fe-2S"/>
</dbReference>
<dbReference type="InterPro" id="IPR036922">
    <property type="entry name" value="Rieske_2Fe-2S_sf"/>
</dbReference>
<dbReference type="PANTHER" id="PTHR46522">
    <property type="entry name" value="CYTIDINE MONOPHOSPHATE-N-ACETYLNEURAMINIC ACID HYDROXYLASE"/>
    <property type="match status" value="1"/>
</dbReference>
<dbReference type="PANTHER" id="PTHR46522:SF1">
    <property type="entry name" value="INACTIVE CYTIDINE MONOPHOSPHATE-N-ACETYLNEURAMINIC ACID HYDROXYLASE"/>
    <property type="match status" value="1"/>
</dbReference>
<dbReference type="Pfam" id="PF13483">
    <property type="entry name" value="Lactamase_B_3"/>
    <property type="match status" value="1"/>
</dbReference>
<dbReference type="Pfam" id="PF00355">
    <property type="entry name" value="Rieske"/>
    <property type="match status" value="1"/>
</dbReference>
<dbReference type="SUPFAM" id="SSF50022">
    <property type="entry name" value="ISP domain"/>
    <property type="match status" value="1"/>
</dbReference>
<dbReference type="SUPFAM" id="SSF56281">
    <property type="entry name" value="Metallo-hydrolase/oxidoreductase"/>
    <property type="match status" value="1"/>
</dbReference>
<dbReference type="PROSITE" id="PS51296">
    <property type="entry name" value="RIESKE"/>
    <property type="match status" value="1"/>
</dbReference>
<sequence>MAAQVSHTVLRLEAEDVRNLKDGINFQKNNKDGKCYIIYKANGELRACRNQCKHQGGLFIKDIEDMDGRTVRCTKHYWKLNVATMQYVNPPDSFMQDELEAVLSETDGSLELLELNPPDPWTAEPREAQDLQAGEITLTYITHACMELKAGERRMMFDPWLTGPAFARGWWLLHEPPKDAMDRLMEADLVYISHMHSDHLSYPTLQHLSKKRPDIPIYVGNTSRPVFWYLEKSGVNLTNINVVPFGVWQNVDDHLRFMILMDGVHPEMDTCLIVEYKGHMILNTVDCTRPNNGRLPHGVDVMMSDFAGGASGFPMTFHGGKYTESWKANFIKNERKKLLNYKAQLVKSLQPKIYCPFAGYFTEAHPSDRYIKETNTKNSPAELNELIRKSCLNTLTWTPLPGSVLDLAVALNNRSNETAITDPPHGTKIYKDNWEFDLYLNQLNASISAEIFKHKHWIQYYYNWAGFRNYNLVIRVIETDDDFQPLNGGFDYLVDFLDLSFPTERPEREHAYEEIKNRVNVMRHVVVNGLLWDDLYIGFNNRMSRDPDVYHHKFWNHFQTELPLSAPDWQHFLQICSQTQENGSSNGCSVS</sequence>
<reference key="1">
    <citation type="submission" date="2004-06" db="EMBL/GenBank/DDBJ databases">
        <authorList>
            <consortium name="NIH - Zebrafish Gene Collection (ZGC) project"/>
        </authorList>
    </citation>
    <scope>NUCLEOTIDE SEQUENCE [LARGE SCALE MRNA]</scope>
</reference>
<evidence type="ECO:0000250" key="1"/>
<evidence type="ECO:0000250" key="2">
    <source>
        <dbReference type="UniProtKB" id="Q61419"/>
    </source>
</evidence>
<evidence type="ECO:0000255" key="3">
    <source>
        <dbReference type="PROSITE-ProRule" id="PRU00628"/>
    </source>
</evidence>
<evidence type="ECO:0000305" key="4"/>
<name>CMAH_DANRE</name>
<feature type="chain" id="PRO_0000127808" description="Cytidine monophosphate-N-acetylneuraminic acid hydroxylase">
    <location>
        <begin position="1"/>
        <end position="591"/>
    </location>
</feature>
<feature type="domain" description="Rieske" evidence="3">
    <location>
        <begin position="12"/>
        <end position="110"/>
    </location>
</feature>
<feature type="binding site" evidence="3">
    <location>
        <position position="52"/>
    </location>
    <ligand>
        <name>[2Fe-2S] cluster</name>
        <dbReference type="ChEBI" id="CHEBI:190135"/>
    </ligand>
</feature>
<feature type="binding site" evidence="3">
    <location>
        <position position="54"/>
    </location>
    <ligand>
        <name>[2Fe-2S] cluster</name>
        <dbReference type="ChEBI" id="CHEBI:190135"/>
    </ligand>
</feature>
<feature type="binding site" evidence="3">
    <location>
        <position position="73"/>
    </location>
    <ligand>
        <name>[2Fe-2S] cluster</name>
        <dbReference type="ChEBI" id="CHEBI:190135"/>
    </ligand>
</feature>
<feature type="binding site" evidence="3">
    <location>
        <position position="76"/>
    </location>
    <ligand>
        <name>[2Fe-2S] cluster</name>
        <dbReference type="ChEBI" id="CHEBI:190135"/>
    </ligand>
</feature>
<proteinExistence type="evidence at transcript level"/>
<comment type="function">
    <text evidence="2">Sialic acids are components of carbohydrate chains of glycoconjugates and are involved in cell-cell recognition and cell-pathogen interactions. Catalyzes the conversion of CMP-N-acetylneuraminic acid (CMP-Neu5Ac) into its hydroxylated derivative CMP-N-glycolylneuraminic acid (CMP-Neu5Gc), a sialic acid abundantly expressed at the surface of many cells.</text>
</comment>
<comment type="catalytic activity">
    <reaction>
        <text>CMP-N-acetyl-beta-neuraminate + 2 Fe(II)-[cytochrome b5] + O2 + 2 H(+) = CMP-N-glycoloyl-beta-neuraminate + 2 Fe(III)-[cytochrome b5] + H2O</text>
        <dbReference type="Rhea" id="RHEA:16145"/>
        <dbReference type="Rhea" id="RHEA-COMP:10438"/>
        <dbReference type="Rhea" id="RHEA-COMP:10439"/>
        <dbReference type="ChEBI" id="CHEBI:15377"/>
        <dbReference type="ChEBI" id="CHEBI:15378"/>
        <dbReference type="ChEBI" id="CHEBI:15379"/>
        <dbReference type="ChEBI" id="CHEBI:29033"/>
        <dbReference type="ChEBI" id="CHEBI:29034"/>
        <dbReference type="ChEBI" id="CHEBI:57812"/>
        <dbReference type="ChEBI" id="CHEBI:58376"/>
        <dbReference type="EC" id="1.14.18.2"/>
    </reaction>
</comment>
<comment type="cofactor">
    <cofactor evidence="3">
        <name>[2Fe-2S] cluster</name>
        <dbReference type="ChEBI" id="CHEBI:190135"/>
    </cofactor>
    <text evidence="3">Binds 1 [2Fe-2S] cluster per subunit.</text>
</comment>
<comment type="pathway">
    <text>Amino-sugar metabolism; N-acetylneuraminate metabolism.</text>
</comment>
<comment type="subcellular location">
    <subcellularLocation>
        <location evidence="1">Cytoplasm</location>
    </subcellularLocation>
</comment>
<comment type="similarity">
    <text evidence="4">Belongs to the CMP-Neu5Ac hydroxylase family.</text>
</comment>
<organism>
    <name type="scientific">Danio rerio</name>
    <name type="common">Zebrafish</name>
    <name type="synonym">Brachydanio rerio</name>
    <dbReference type="NCBI Taxonomy" id="7955"/>
    <lineage>
        <taxon>Eukaryota</taxon>
        <taxon>Metazoa</taxon>
        <taxon>Chordata</taxon>
        <taxon>Craniata</taxon>
        <taxon>Vertebrata</taxon>
        <taxon>Euteleostomi</taxon>
        <taxon>Actinopterygii</taxon>
        <taxon>Neopterygii</taxon>
        <taxon>Teleostei</taxon>
        <taxon>Ostariophysi</taxon>
        <taxon>Cypriniformes</taxon>
        <taxon>Danionidae</taxon>
        <taxon>Danioninae</taxon>
        <taxon>Danio</taxon>
    </lineage>
</organism>
<accession>Q6GML1</accession>